<sequence length="143" mass="16674">MSEEKQWTEVFHAIDKDKNGFLTREEIAQCLKEVGVCPNVADKIIKETDMNSDGKISLEEYLNALRKLPPREKCVARWREVFQSIDKDGSGKVSIKELDEFLKTSGMDIDQNSLRNWMTQNDKNKDGELDYDEFLAYVRQTYK</sequence>
<dbReference type="EMBL" id="M80260">
    <property type="protein sequence ID" value="AAA29859.1"/>
    <property type="molecule type" value="mRNA"/>
</dbReference>
<dbReference type="SMR" id="Q07167"/>
<dbReference type="STRING" id="6183.Q07167"/>
<dbReference type="EnsemblMetazoa" id="Smp_096390.1">
    <property type="protein sequence ID" value="Smp_096390.1"/>
    <property type="gene ID" value="Smp_096390"/>
</dbReference>
<dbReference type="WBParaSite" id="Smp_096390.1">
    <property type="protein sequence ID" value="Smp_096390.1"/>
    <property type="gene ID" value="Smp_096390"/>
</dbReference>
<dbReference type="InParanoid" id="Q07167"/>
<dbReference type="OMA" id="YLNMEEV"/>
<dbReference type="PhylomeDB" id="Q07167"/>
<dbReference type="Proteomes" id="UP000008854">
    <property type="component" value="Unassembled WGS sequence"/>
</dbReference>
<dbReference type="GO" id="GO:0005509">
    <property type="term" value="F:calcium ion binding"/>
    <property type="evidence" value="ECO:0007669"/>
    <property type="project" value="InterPro"/>
</dbReference>
<dbReference type="Gene3D" id="1.10.238.10">
    <property type="entry name" value="EF-hand"/>
    <property type="match status" value="2"/>
</dbReference>
<dbReference type="InterPro" id="IPR051581">
    <property type="entry name" value="Ca-bind_SignalingProt"/>
</dbReference>
<dbReference type="InterPro" id="IPR011992">
    <property type="entry name" value="EF-hand-dom_pair"/>
</dbReference>
<dbReference type="InterPro" id="IPR018247">
    <property type="entry name" value="EF_Hand_1_Ca_BS"/>
</dbReference>
<dbReference type="InterPro" id="IPR002048">
    <property type="entry name" value="EF_hand_dom"/>
</dbReference>
<dbReference type="PANTHER" id="PTHR34524">
    <property type="entry name" value="CALCYPHOSIN"/>
    <property type="match status" value="1"/>
</dbReference>
<dbReference type="PANTHER" id="PTHR34524:SF6">
    <property type="entry name" value="CALCYPHOSINE LIKE"/>
    <property type="match status" value="1"/>
</dbReference>
<dbReference type="Pfam" id="PF13499">
    <property type="entry name" value="EF-hand_7"/>
    <property type="match status" value="2"/>
</dbReference>
<dbReference type="SMART" id="SM00054">
    <property type="entry name" value="EFh"/>
    <property type="match status" value="4"/>
</dbReference>
<dbReference type="SUPFAM" id="SSF47473">
    <property type="entry name" value="EF-hand"/>
    <property type="match status" value="1"/>
</dbReference>
<dbReference type="PROSITE" id="PS00018">
    <property type="entry name" value="EF_HAND_1"/>
    <property type="match status" value="4"/>
</dbReference>
<dbReference type="PROSITE" id="PS50222">
    <property type="entry name" value="EF_HAND_2"/>
    <property type="match status" value="4"/>
</dbReference>
<organism>
    <name type="scientific">Schistosoma mansoni</name>
    <name type="common">Blood fluke</name>
    <dbReference type="NCBI Taxonomy" id="6183"/>
    <lineage>
        <taxon>Eukaryota</taxon>
        <taxon>Metazoa</taxon>
        <taxon>Spiralia</taxon>
        <taxon>Lophotrochozoa</taxon>
        <taxon>Platyhelminthes</taxon>
        <taxon>Trematoda</taxon>
        <taxon>Digenea</taxon>
        <taxon>Strigeidida</taxon>
        <taxon>Schistosomatoidea</taxon>
        <taxon>Schistosomatidae</taxon>
        <taxon>Schistosoma</taxon>
    </lineage>
</organism>
<accession>Q07167</accession>
<feature type="chain" id="PRO_0000073733" description="16 kDa calcium-binding protein">
    <location>
        <begin position="1"/>
        <end position="143"/>
    </location>
</feature>
<feature type="domain" description="EF-hand 1" evidence="1">
    <location>
        <begin position="2"/>
        <end position="37"/>
    </location>
</feature>
<feature type="domain" description="EF-hand 2" evidence="1">
    <location>
        <begin position="41"/>
        <end position="71"/>
    </location>
</feature>
<feature type="domain" description="EF-hand 3" evidence="1">
    <location>
        <begin position="73"/>
        <end position="108"/>
    </location>
</feature>
<feature type="domain" description="EF-hand 4" evidence="1">
    <location>
        <begin position="109"/>
        <end position="143"/>
    </location>
</feature>
<feature type="binding site" evidence="1">
    <location>
        <position position="15"/>
    </location>
    <ligand>
        <name>Ca(2+)</name>
        <dbReference type="ChEBI" id="CHEBI:29108"/>
        <label>1</label>
    </ligand>
</feature>
<feature type="binding site" evidence="1">
    <location>
        <position position="17"/>
    </location>
    <ligand>
        <name>Ca(2+)</name>
        <dbReference type="ChEBI" id="CHEBI:29108"/>
        <label>1</label>
    </ligand>
</feature>
<feature type="binding site" evidence="1">
    <location>
        <position position="19"/>
    </location>
    <ligand>
        <name>Ca(2+)</name>
        <dbReference type="ChEBI" id="CHEBI:29108"/>
        <label>1</label>
    </ligand>
</feature>
<feature type="binding site" evidence="1">
    <location>
        <position position="26"/>
    </location>
    <ligand>
        <name>Ca(2+)</name>
        <dbReference type="ChEBI" id="CHEBI:29108"/>
        <label>1</label>
    </ligand>
</feature>
<feature type="binding site" evidence="1">
    <location>
        <position position="49"/>
    </location>
    <ligand>
        <name>Ca(2+)</name>
        <dbReference type="ChEBI" id="CHEBI:29108"/>
        <label>2</label>
    </ligand>
</feature>
<feature type="binding site" evidence="1">
    <location>
        <position position="51"/>
    </location>
    <ligand>
        <name>Ca(2+)</name>
        <dbReference type="ChEBI" id="CHEBI:29108"/>
        <label>2</label>
    </ligand>
</feature>
<feature type="binding site" evidence="1">
    <location>
        <position position="53"/>
    </location>
    <ligand>
        <name>Ca(2+)</name>
        <dbReference type="ChEBI" id="CHEBI:29108"/>
        <label>2</label>
    </ligand>
</feature>
<feature type="binding site" evidence="1">
    <location>
        <position position="55"/>
    </location>
    <ligand>
        <name>Ca(2+)</name>
        <dbReference type="ChEBI" id="CHEBI:29108"/>
        <label>2</label>
    </ligand>
</feature>
<feature type="binding site" evidence="1">
    <location>
        <position position="60"/>
    </location>
    <ligand>
        <name>Ca(2+)</name>
        <dbReference type="ChEBI" id="CHEBI:29108"/>
        <label>2</label>
    </ligand>
</feature>
<feature type="binding site" evidence="1">
    <location>
        <position position="86"/>
    </location>
    <ligand>
        <name>Ca(2+)</name>
        <dbReference type="ChEBI" id="CHEBI:29108"/>
        <label>3</label>
    </ligand>
</feature>
<feature type="binding site" evidence="1">
    <location>
        <position position="88"/>
    </location>
    <ligand>
        <name>Ca(2+)</name>
        <dbReference type="ChEBI" id="CHEBI:29108"/>
        <label>3</label>
    </ligand>
</feature>
<feature type="binding site" evidence="1">
    <location>
        <position position="90"/>
    </location>
    <ligand>
        <name>Ca(2+)</name>
        <dbReference type="ChEBI" id="CHEBI:29108"/>
        <label>3</label>
    </ligand>
</feature>
<feature type="binding site" evidence="1">
    <location>
        <position position="92"/>
    </location>
    <ligand>
        <name>Ca(2+)</name>
        <dbReference type="ChEBI" id="CHEBI:29108"/>
        <label>3</label>
    </ligand>
</feature>
<feature type="binding site" evidence="1">
    <location>
        <position position="97"/>
    </location>
    <ligand>
        <name>Ca(2+)</name>
        <dbReference type="ChEBI" id="CHEBI:29108"/>
        <label>3</label>
    </ligand>
</feature>
<feature type="binding site" evidence="1">
    <location>
        <position position="122"/>
    </location>
    <ligand>
        <name>Ca(2+)</name>
        <dbReference type="ChEBI" id="CHEBI:29108"/>
        <label>4</label>
    </ligand>
</feature>
<feature type="binding site" evidence="1">
    <location>
        <position position="124"/>
    </location>
    <ligand>
        <name>Ca(2+)</name>
        <dbReference type="ChEBI" id="CHEBI:29108"/>
        <label>4</label>
    </ligand>
</feature>
<feature type="binding site" evidence="1">
    <location>
        <position position="126"/>
    </location>
    <ligand>
        <name>Ca(2+)</name>
        <dbReference type="ChEBI" id="CHEBI:29108"/>
        <label>4</label>
    </ligand>
</feature>
<feature type="binding site" evidence="1">
    <location>
        <position position="128"/>
    </location>
    <ligand>
        <name>Ca(2+)</name>
        <dbReference type="ChEBI" id="CHEBI:29108"/>
        <label>4</label>
    </ligand>
</feature>
<feature type="binding site" evidence="1">
    <location>
        <position position="133"/>
    </location>
    <ligand>
        <name>Ca(2+)</name>
        <dbReference type="ChEBI" id="CHEBI:29108"/>
        <label>4</label>
    </ligand>
</feature>
<keyword id="KW-0106">Calcium</keyword>
<keyword id="KW-0479">Metal-binding</keyword>
<keyword id="KW-1185">Reference proteome</keyword>
<keyword id="KW-0677">Repeat</keyword>
<name>SM16_SCHMA</name>
<protein>
    <recommendedName>
        <fullName>16 kDa calcium-binding protein</fullName>
    </recommendedName>
    <alternativeName>
        <fullName>Egg antigen SME16</fullName>
    </alternativeName>
</protein>
<evidence type="ECO:0000255" key="1">
    <source>
        <dbReference type="PROSITE-ProRule" id="PRU00448"/>
    </source>
</evidence>
<proteinExistence type="evidence at transcript level"/>
<comment type="function">
    <text>Calcium-binding protein.</text>
</comment>
<comment type="tissue specificity">
    <text>Found in eggs.</text>
</comment>
<reference key="1">
    <citation type="journal article" date="1992" name="Mol. Biochem. Parasitol.">
        <title>A stage-specific calcium-binding protein expressed in eggs of Schistosoma mansoni.</title>
        <authorList>
            <person name="Moser D."/>
            <person name="Doenhoff M.J."/>
            <person name="Klinkert M.Q."/>
        </authorList>
    </citation>
    <scope>NUCLEOTIDE SEQUENCE [MRNA]</scope>
</reference>